<keyword id="KW-0749">Sporulation</keyword>
<name>TLP_GEOSW</name>
<reference key="1">
    <citation type="submission" date="2009-06" db="EMBL/GenBank/DDBJ databases">
        <title>Complete sequence of chromosome of Geopacillus sp. WCH70.</title>
        <authorList>
            <consortium name="US DOE Joint Genome Institute"/>
            <person name="Lucas S."/>
            <person name="Copeland A."/>
            <person name="Lapidus A."/>
            <person name="Glavina del Rio T."/>
            <person name="Dalin E."/>
            <person name="Tice H."/>
            <person name="Bruce D."/>
            <person name="Goodwin L."/>
            <person name="Pitluck S."/>
            <person name="Chertkov O."/>
            <person name="Brettin T."/>
            <person name="Detter J.C."/>
            <person name="Han C."/>
            <person name="Larimer F."/>
            <person name="Land M."/>
            <person name="Hauser L."/>
            <person name="Kyrpides N."/>
            <person name="Mikhailova N."/>
            <person name="Brumm P."/>
            <person name="Mead D.A."/>
            <person name="Richardson P."/>
        </authorList>
    </citation>
    <scope>NUCLEOTIDE SEQUENCE [LARGE SCALE GENOMIC DNA]</scope>
    <source>
        <strain>WCH70</strain>
    </source>
</reference>
<comment type="subcellular location">
    <subcellularLocation>
        <location evidence="1">Spore core</location>
    </subcellularLocation>
</comment>
<comment type="induction">
    <text evidence="1">Expressed only in the forespore compartment of sporulating cells.</text>
</comment>
<comment type="similarity">
    <text evidence="1">Belongs to the Tlp family.</text>
</comment>
<evidence type="ECO:0000255" key="1">
    <source>
        <dbReference type="HAMAP-Rule" id="MF_01506"/>
    </source>
</evidence>
<feature type="chain" id="PRO_1000215333" description="Small, acid-soluble spore protein Tlp">
    <location>
        <begin position="1"/>
        <end position="77"/>
    </location>
</feature>
<organism>
    <name type="scientific">Geobacillus sp. (strain WCH70)</name>
    <dbReference type="NCBI Taxonomy" id="471223"/>
    <lineage>
        <taxon>Bacteria</taxon>
        <taxon>Bacillati</taxon>
        <taxon>Bacillota</taxon>
        <taxon>Bacilli</taxon>
        <taxon>Bacillales</taxon>
        <taxon>Anoxybacillaceae</taxon>
        <taxon>Geobacillus</taxon>
    </lineage>
</organism>
<dbReference type="EMBL" id="CP001638">
    <property type="protein sequence ID" value="ACS24623.1"/>
    <property type="molecule type" value="Genomic_DNA"/>
</dbReference>
<dbReference type="SMR" id="C5D2I1"/>
<dbReference type="STRING" id="471223.GWCH70_1887"/>
<dbReference type="KEGG" id="gwc:GWCH70_1887"/>
<dbReference type="eggNOG" id="ENOG50330RR">
    <property type="taxonomic scope" value="Bacteria"/>
</dbReference>
<dbReference type="HOGENOM" id="CLU_178266_1_0_9"/>
<dbReference type="OrthoDB" id="1799076at2"/>
<dbReference type="GO" id="GO:0030436">
    <property type="term" value="P:asexual sporulation"/>
    <property type="evidence" value="ECO:0007669"/>
    <property type="project" value="UniProtKB-UniRule"/>
</dbReference>
<dbReference type="GO" id="GO:0030435">
    <property type="term" value="P:sporulation resulting in formation of a cellular spore"/>
    <property type="evidence" value="ECO:0007669"/>
    <property type="project" value="UniProtKB-KW"/>
</dbReference>
<dbReference type="HAMAP" id="MF_01506">
    <property type="entry name" value="Tlp"/>
    <property type="match status" value="1"/>
</dbReference>
<dbReference type="InterPro" id="IPR017524">
    <property type="entry name" value="SASP_thioredoxin-like"/>
</dbReference>
<dbReference type="NCBIfam" id="TIGR03090">
    <property type="entry name" value="SASP_tlp"/>
    <property type="match status" value="1"/>
</dbReference>
<dbReference type="Pfam" id="PF19824">
    <property type="entry name" value="Tlp"/>
    <property type="match status" value="1"/>
</dbReference>
<accession>C5D2I1</accession>
<sequence length="77" mass="8996">MAHHRPKPDDRSDNVEKLQDMVQNTIENIEKAEETMQFASPEEREKIAEKNKRREEAIAAMRAEIKDEAAARENGYR</sequence>
<proteinExistence type="inferred from homology"/>
<gene>
    <name evidence="1" type="primary">tlp</name>
    <name type="ordered locus">GWCH70_1887</name>
</gene>
<protein>
    <recommendedName>
        <fullName evidence="1">Small, acid-soluble spore protein Tlp</fullName>
    </recommendedName>
</protein>